<organism>
    <name type="scientific">Felis catus</name>
    <name type="common">Cat</name>
    <name type="synonym">Felis silvestris catus</name>
    <dbReference type="NCBI Taxonomy" id="9685"/>
    <lineage>
        <taxon>Eukaryota</taxon>
        <taxon>Metazoa</taxon>
        <taxon>Chordata</taxon>
        <taxon>Craniata</taxon>
        <taxon>Vertebrata</taxon>
        <taxon>Euteleostomi</taxon>
        <taxon>Mammalia</taxon>
        <taxon>Eutheria</taxon>
        <taxon>Laurasiatheria</taxon>
        <taxon>Carnivora</taxon>
        <taxon>Feliformia</taxon>
        <taxon>Felidae</taxon>
        <taxon>Felinae</taxon>
        <taxon>Felis</taxon>
    </lineage>
</organism>
<dbReference type="EC" id="3.4.14.5" evidence="2"/>
<dbReference type="EMBL" id="AB023952">
    <property type="protein sequence ID" value="BAA92344.1"/>
    <property type="molecule type" value="mRNA"/>
</dbReference>
<dbReference type="RefSeq" id="NP_001009838.1">
    <property type="nucleotide sequence ID" value="NM_001009838.1"/>
</dbReference>
<dbReference type="SMR" id="Q9N2I7"/>
<dbReference type="STRING" id="9685.ENSFCAP00000037887"/>
<dbReference type="ESTHER" id="felca-CD26">
    <property type="family name" value="DPP4N_Peptidase_S9"/>
</dbReference>
<dbReference type="MEROPS" id="S09.003"/>
<dbReference type="GlyCosmos" id="Q9N2I7">
    <property type="glycosylation" value="11 sites, No reported glycans"/>
</dbReference>
<dbReference type="PaxDb" id="9685-ENSFCAP00000004117"/>
<dbReference type="GeneID" id="493787"/>
<dbReference type="KEGG" id="fca:493787"/>
<dbReference type="CTD" id="1803"/>
<dbReference type="eggNOG" id="KOG2100">
    <property type="taxonomic scope" value="Eukaryota"/>
</dbReference>
<dbReference type="InParanoid" id="Q9N2I7"/>
<dbReference type="OrthoDB" id="16520at2759"/>
<dbReference type="Proteomes" id="UP000011712">
    <property type="component" value="Unplaced"/>
</dbReference>
<dbReference type="GO" id="GO:0070161">
    <property type="term" value="C:anchoring junction"/>
    <property type="evidence" value="ECO:0007669"/>
    <property type="project" value="UniProtKB-SubCell"/>
</dbReference>
<dbReference type="GO" id="GO:0016324">
    <property type="term" value="C:apical plasma membrane"/>
    <property type="evidence" value="ECO:0007669"/>
    <property type="project" value="UniProtKB-SubCell"/>
</dbReference>
<dbReference type="GO" id="GO:0009986">
    <property type="term" value="C:cell surface"/>
    <property type="evidence" value="ECO:0000250"/>
    <property type="project" value="UniProtKB"/>
</dbReference>
<dbReference type="GO" id="GO:0030139">
    <property type="term" value="C:endocytic vesicle"/>
    <property type="evidence" value="ECO:0000250"/>
    <property type="project" value="UniProtKB"/>
</dbReference>
<dbReference type="GO" id="GO:0005576">
    <property type="term" value="C:extracellular region"/>
    <property type="evidence" value="ECO:0007669"/>
    <property type="project" value="UniProtKB-SubCell"/>
</dbReference>
<dbReference type="GO" id="GO:0030027">
    <property type="term" value="C:lamellipodium"/>
    <property type="evidence" value="ECO:0000250"/>
    <property type="project" value="UniProtKB"/>
</dbReference>
<dbReference type="GO" id="GO:0031258">
    <property type="term" value="C:lamellipodium membrane"/>
    <property type="evidence" value="ECO:0007669"/>
    <property type="project" value="UniProtKB-SubCell"/>
</dbReference>
<dbReference type="GO" id="GO:0045121">
    <property type="term" value="C:membrane raft"/>
    <property type="evidence" value="ECO:0007669"/>
    <property type="project" value="UniProtKB-SubCell"/>
</dbReference>
<dbReference type="GO" id="GO:0005886">
    <property type="term" value="C:plasma membrane"/>
    <property type="evidence" value="ECO:0000318"/>
    <property type="project" value="GO_Central"/>
</dbReference>
<dbReference type="GO" id="GO:0004177">
    <property type="term" value="F:aminopeptidase activity"/>
    <property type="evidence" value="ECO:0007669"/>
    <property type="project" value="UniProtKB-KW"/>
</dbReference>
<dbReference type="GO" id="GO:0008239">
    <property type="term" value="F:dipeptidyl-peptidase activity"/>
    <property type="evidence" value="ECO:0000250"/>
    <property type="project" value="UniProtKB"/>
</dbReference>
<dbReference type="GO" id="GO:0002020">
    <property type="term" value="F:protease binding"/>
    <property type="evidence" value="ECO:0000250"/>
    <property type="project" value="UniProtKB"/>
</dbReference>
<dbReference type="GO" id="GO:0042803">
    <property type="term" value="F:protein homodimerization activity"/>
    <property type="evidence" value="ECO:0000250"/>
    <property type="project" value="UniProtKB"/>
</dbReference>
<dbReference type="GO" id="GO:0004252">
    <property type="term" value="F:serine-type endopeptidase activity"/>
    <property type="evidence" value="ECO:0007669"/>
    <property type="project" value="InterPro"/>
</dbReference>
<dbReference type="GO" id="GO:0005102">
    <property type="term" value="F:signaling receptor binding"/>
    <property type="evidence" value="ECO:0000250"/>
    <property type="project" value="UniProtKB"/>
</dbReference>
<dbReference type="GO" id="GO:0007155">
    <property type="term" value="P:cell adhesion"/>
    <property type="evidence" value="ECO:0007669"/>
    <property type="project" value="UniProtKB-KW"/>
</dbReference>
<dbReference type="GO" id="GO:0043542">
    <property type="term" value="P:endothelial cell migration"/>
    <property type="evidence" value="ECO:0000250"/>
    <property type="project" value="UniProtKB"/>
</dbReference>
<dbReference type="GO" id="GO:0010716">
    <property type="term" value="P:negative regulation of extracellular matrix disassembly"/>
    <property type="evidence" value="ECO:0000250"/>
    <property type="project" value="UniProtKB"/>
</dbReference>
<dbReference type="GO" id="GO:0008284">
    <property type="term" value="P:positive regulation of cell population proliferation"/>
    <property type="evidence" value="ECO:0000250"/>
    <property type="project" value="UniProtKB"/>
</dbReference>
<dbReference type="GO" id="GO:0006508">
    <property type="term" value="P:proteolysis"/>
    <property type="evidence" value="ECO:0000318"/>
    <property type="project" value="GO_Central"/>
</dbReference>
<dbReference type="GO" id="GO:0031295">
    <property type="term" value="P:T cell costimulation"/>
    <property type="evidence" value="ECO:0000250"/>
    <property type="project" value="UniProtKB"/>
</dbReference>
<dbReference type="FunFam" id="2.140.10.30:FF:000001">
    <property type="entry name" value="Dipeptidyl peptidase 4"/>
    <property type="match status" value="1"/>
</dbReference>
<dbReference type="FunFam" id="3.40.50.1820:FF:000003">
    <property type="entry name" value="Dipeptidyl peptidase 4"/>
    <property type="match status" value="1"/>
</dbReference>
<dbReference type="Gene3D" id="3.40.50.1820">
    <property type="entry name" value="alpha/beta hydrolase"/>
    <property type="match status" value="1"/>
</dbReference>
<dbReference type="Gene3D" id="2.140.10.30">
    <property type="entry name" value="Dipeptidylpeptidase IV, N-terminal domain"/>
    <property type="match status" value="1"/>
</dbReference>
<dbReference type="InterPro" id="IPR029058">
    <property type="entry name" value="AB_hydrolase_fold"/>
</dbReference>
<dbReference type="InterPro" id="IPR040522">
    <property type="entry name" value="DPPIV_rep"/>
</dbReference>
<dbReference type="InterPro" id="IPR002471">
    <property type="entry name" value="Pept_S9_AS"/>
</dbReference>
<dbReference type="InterPro" id="IPR001375">
    <property type="entry name" value="Peptidase_S9_cat"/>
</dbReference>
<dbReference type="InterPro" id="IPR002469">
    <property type="entry name" value="Peptidase_S9B_N"/>
</dbReference>
<dbReference type="InterPro" id="IPR050278">
    <property type="entry name" value="Serine_Prot_S9B/DPPIV"/>
</dbReference>
<dbReference type="PANTHER" id="PTHR11731:SF128">
    <property type="entry name" value="DIPEPTIDYL PEPTIDASE 4"/>
    <property type="match status" value="1"/>
</dbReference>
<dbReference type="PANTHER" id="PTHR11731">
    <property type="entry name" value="PROTEASE FAMILY S9B,C DIPEPTIDYL-PEPTIDASE IV-RELATED"/>
    <property type="match status" value="1"/>
</dbReference>
<dbReference type="Pfam" id="PF00930">
    <property type="entry name" value="DPPIV_N"/>
    <property type="match status" value="1"/>
</dbReference>
<dbReference type="Pfam" id="PF18811">
    <property type="entry name" value="DPPIV_rep"/>
    <property type="match status" value="1"/>
</dbReference>
<dbReference type="Pfam" id="PF00326">
    <property type="entry name" value="Peptidase_S9"/>
    <property type="match status" value="1"/>
</dbReference>
<dbReference type="SUPFAM" id="SSF53474">
    <property type="entry name" value="alpha/beta-Hydrolases"/>
    <property type="match status" value="1"/>
</dbReference>
<dbReference type="SUPFAM" id="SSF82171">
    <property type="entry name" value="DPP6 N-terminal domain-like"/>
    <property type="match status" value="1"/>
</dbReference>
<dbReference type="PROSITE" id="PS00708">
    <property type="entry name" value="PRO_ENDOPEP_SER"/>
    <property type="match status" value="1"/>
</dbReference>
<proteinExistence type="evidence at transcript level"/>
<name>DPP4_FELCA</name>
<protein>
    <recommendedName>
        <fullName>Dipeptidyl peptidase 4</fullName>
        <ecNumber evidence="2">3.4.14.5</ecNumber>
    </recommendedName>
    <alternativeName>
        <fullName>Dipeptidyl peptidase IV</fullName>
        <shortName>DPP IV</shortName>
    </alternativeName>
    <alternativeName>
        <fullName>T-cell activation antigen CD26</fullName>
    </alternativeName>
    <cdAntigenName>CD26</cdAntigenName>
    <component>
        <recommendedName>
            <fullName>Dipeptidyl peptidase 4 membrane form</fullName>
        </recommendedName>
        <alternativeName>
            <fullName>Dipeptidyl peptidase IV membrane form</fullName>
        </alternativeName>
    </component>
    <component>
        <recommendedName>
            <fullName>Dipeptidyl peptidase 4 soluble form</fullName>
        </recommendedName>
        <alternativeName>
            <fullName>Dipeptidyl peptidase IV soluble form</fullName>
        </alternativeName>
    </component>
</protein>
<sequence length="765" mass="88213">MKTPWKVLLGLLGLAALITIITVPVVLLNKGNDAAADSRRTYTLTDYLKNTFRVKFYSLRWVSDHDYLYKQDNNILLFNAEYGNSSIFLENSTFDEFEHSINDYSVSPDGQFILLEYNYVKQWRHSYTASYDIYDLNKRQLITEEKIPNNTQWITWSPEGHKLAYVWKNDVYVKNEPNSSSHRITWTGEENAIYNGIADWVYEEEIFSAYSALWWSPKGTFLAYAQFNDTQVPLIEYSFYSDESLQYPMTMRIPYPKAGAANPTVKLFVIKTDNLNPNTNATSVEITPPAAMLTGDYYLCDVTWANEERISLQWLRRIQNYSVMDIRDYNNSTGKWISSAAQEHIEMSTTGWVGRFRPAEPHFTSDGRNFYKIISNEDGYKHICRFQIDKKDCTFITKGAWEVIGIEALTTDYLYYISNEYKGMPGGRNLYKIQLNDYTKVACLSCELKPERCQYYSVSFSKEAKYYQLRCSGPGLPLYTLHRSSNDEELRVLEDNSALDKMLQEVQMPSKKLDFIILNETKFWYQMILPPHFDTSKKYPLLIDVYAGPCSQKADAIFRLNWATYLASTENIIVASFDGRGSGYQGDKIMHAVNRRLGTFEVEDQIEAARQFSKMGFVDDKRIAIWGWSYGGYVTSMVLGAGSGVFKCGIAVAPVSRWEYYDSVYTERYMGLPTPQDNLDYYKNSTVMSRAENFKQVEYLLIHGTADDNVHFQQSAQISKALVDAGVDFQAMWYTDEDHGIASGPAHQHIYTHMSHFIKQCFSLP</sequence>
<reference key="1">
    <citation type="journal article" date="1999" name="Immunogenetics">
        <title>Molecular cloning and sequencing of a cDNA encoding the feline T-cell activation antigen CD26 homologue.</title>
        <authorList>
            <person name="Nishimura Y."/>
            <person name="Miyazawa T."/>
            <person name="Ikeda Y."/>
            <person name="Izumiya Y."/>
            <person name="Nakamura K."/>
            <person name="Sato E."/>
            <person name="Mikami T."/>
            <person name="Takahashi E."/>
        </authorList>
    </citation>
    <scope>NUCLEOTIDE SEQUENCE [MRNA]</scope>
    <source>
        <tissue>Peripheral blood</tissue>
    </source>
</reference>
<accession>Q9N2I7</accession>
<gene>
    <name type="primary">DPP4</name>
    <name type="synonym">CD26</name>
</gene>
<keyword id="KW-0031">Aminopeptidase</keyword>
<keyword id="KW-0130">Cell adhesion</keyword>
<keyword id="KW-0965">Cell junction</keyword>
<keyword id="KW-1003">Cell membrane</keyword>
<keyword id="KW-0966">Cell projection</keyword>
<keyword id="KW-1015">Disulfide bond</keyword>
<keyword id="KW-0325">Glycoprotein</keyword>
<keyword id="KW-0378">Hydrolase</keyword>
<keyword id="KW-0472">Membrane</keyword>
<keyword id="KW-0645">Protease</keyword>
<keyword id="KW-0675">Receptor</keyword>
<keyword id="KW-1185">Reference proteome</keyword>
<keyword id="KW-0964">Secreted</keyword>
<keyword id="KW-0720">Serine protease</keyword>
<keyword id="KW-0735">Signal-anchor</keyword>
<keyword id="KW-0812">Transmembrane</keyword>
<keyword id="KW-1133">Transmembrane helix</keyword>
<evidence type="ECO:0000250" key="1"/>
<evidence type="ECO:0000250" key="2">
    <source>
        <dbReference type="UniProtKB" id="P27487"/>
    </source>
</evidence>
<evidence type="ECO:0000255" key="3"/>
<evidence type="ECO:0000255" key="4">
    <source>
        <dbReference type="PROSITE-ProRule" id="PRU10084"/>
    </source>
</evidence>
<evidence type="ECO:0000305" key="5"/>
<comment type="function">
    <text evidence="2">Cell surface glycoprotein receptor involved in the costimulatory signal essential for T-cell receptor (TCR)-mediated T-cell activation. Acts as a positive regulator of T-cell coactivation, by binding at least ADA, CAV1, IGF2R, and PTPRC. Its binding to CAV1 and CARD11 induces T-cell proliferation and NF-kappa-B activation in a T-cell receptor/CD3-dependent manner. Its interaction with ADA also regulates lymphocyte-epithelial cell adhesion. In association with FAP is involved in the pericellular proteolysis of the extracellular matrix (ECM), the migration and invasion of endothelial cells into the ECM. May be involved in the promotion of lymphatic endothelial cells adhesion, migration and tube formation. When overexpressed, enhanced cell proliferation, a process inhibited by GPC3. Also acts as a serine exopeptidase with a dipeptidyl peptidase activity that regulates various physiological processes by cleaving peptides in the circulation, including many chemokines, mitogenic growth factors, neuropeptides and peptide hormones. Removes N-terminal dipeptides sequentially from polypeptides having unsubstituted N-termini provided that the penultimate residue is proline.</text>
</comment>
<comment type="catalytic activity">
    <reaction evidence="2 4">
        <text>Release of an N-terminal dipeptide, Xaa-Yaa-|-Zaa-, from a polypeptide, preferentially when Yaa is Pro, provided Zaa is neither Pro nor hydroxyproline.</text>
        <dbReference type="EC" id="3.4.14.5"/>
    </reaction>
</comment>
<comment type="activity regulation">
    <text evidence="1">Inhibited by GPC3 and diprotin A.</text>
</comment>
<comment type="subunit">
    <text evidence="2">Monomer. Homodimer. Heterodimer with Seprase (FAP). Requires homodimerization for optimal dipeptidyl peptidase activity and T-cell costimulation. Found in a membrane raft complex, at least composed of BCL10, CARD11, DPP4 and IKBKB. Associates with collagen. Interacts with PTPRC; the interaction is enhanced in an interleukin-12-dependent manner in activated lymphocytes. Interacts (extracellular domain) with ADA; does not inhibit its dipeptidyl peptidase activity. Interacts with CAV1 (via the N-terminus); the interaction is direct. Interacts (via cytoplasmic tail) with CARD11 (via PDZ domain); its homodimerization is necessary for interaction with CARD11. Interacts with IGF2R; the interaction is direct. Interacts with GPC3.</text>
</comment>
<comment type="subcellular location">
    <molecule>Dipeptidyl peptidase 4 soluble form</molecule>
    <subcellularLocation>
        <location>Secreted</location>
    </subcellularLocation>
    <text evidence="1">Detected in the serum and the seminal fluid.</text>
</comment>
<comment type="subcellular location">
    <subcellularLocation>
        <location evidence="1">Cell membrane</location>
        <topology evidence="1">Single-pass type II membrane protein</topology>
    </subcellularLocation>
    <subcellularLocation>
        <location evidence="1">Apical cell membrane</location>
        <topology evidence="1">Single-pass type II membrane protein</topology>
    </subcellularLocation>
    <subcellularLocation>
        <location evidence="1">Cell projection</location>
        <location evidence="1">Invadopodium membrane</location>
        <topology evidence="1">Single-pass type II membrane protein</topology>
    </subcellularLocation>
    <subcellularLocation>
        <location evidence="1">Cell projection</location>
        <location evidence="1">Lamellipodium membrane</location>
        <topology evidence="1">Single-pass type II membrane protein</topology>
    </subcellularLocation>
    <subcellularLocation>
        <location evidence="1">Cell junction</location>
    </subcellularLocation>
    <subcellularLocation>
        <location evidence="1">Membrane raft</location>
    </subcellularLocation>
    <text evidence="1">Translocated to the apical membrane through the concerted action of N- and O-Glycans and its association with lipid microdomains containing cholesterol and sphingolipids. Redistributed to membrane rafts in T-cell in an interleukin-12-dependent activation. Its interaction with CAV1 is necessary for its translocation to membrane rafts. Colocalized with PTPRC in membrane rafts. Colocalized with FAP in invadopodia and lamellipodia of migratory activated endothelial cells in collagenous matrix. Colocalized with FAP on endothelial cells of capillary-like microvessels but not large vessels within invasive breast ductal carcinoma. Colocalized with ADA at the cell junction in lymphocyte-epithelial cell adhesion. Colocalized with IGF2R in internalized cytoplasmic vesicles adjacent to the cell surface (By similarity).</text>
</comment>
<comment type="PTM">
    <text evidence="1">The soluble form (Dipeptidyl peptidase 4 soluble form also named SDPP) derives from the membrane form (Dipeptidyl peptidase 4 membrane form also named MDPP) by proteolytic processing.</text>
</comment>
<comment type="PTM">
    <text evidence="1">N- and O-Glycosylated.</text>
</comment>
<comment type="PTM">
    <text evidence="1">Phosphorylated. Mannose 6-phosphate residues in the carbohydrate moiety are necessary for interaction with IGF2R in activated T-cells. Mannose 6-phosphorylation is induced during T-cell activation (By similarity).</text>
</comment>
<comment type="similarity">
    <text evidence="5">Belongs to the peptidase S9B family. DPPIV subfamily.</text>
</comment>
<feature type="chain" id="PRO_0000027211" description="Dipeptidyl peptidase 4 membrane form">
    <location>
        <begin position="1"/>
        <end position="765"/>
    </location>
</feature>
<feature type="chain" id="PRO_0000027212" description="Dipeptidyl peptidase 4 soluble form" evidence="1">
    <location>
        <begin position="38"/>
        <end position="765"/>
    </location>
</feature>
<feature type="topological domain" description="Cytoplasmic" evidence="3">
    <location>
        <begin position="1"/>
        <end position="6"/>
    </location>
</feature>
<feature type="transmembrane region" description="Helical; Signal-anchor for type II membrane protein" evidence="3">
    <location>
        <begin position="7"/>
        <end position="29"/>
    </location>
</feature>
<feature type="topological domain" description="Extracellular" evidence="3">
    <location>
        <begin position="30"/>
        <end position="765"/>
    </location>
</feature>
<feature type="active site" description="Charge relay system" evidence="4">
    <location>
        <position position="629"/>
    </location>
</feature>
<feature type="active site" description="Charge relay system" evidence="4">
    <location>
        <position position="707"/>
    </location>
</feature>
<feature type="active site" description="Charge relay system" evidence="4">
    <location>
        <position position="739"/>
    </location>
</feature>
<feature type="glycosylation site" description="N-linked (GlcNAc...) asparagine" evidence="1">
    <location>
        <position position="84"/>
    </location>
</feature>
<feature type="glycosylation site" description="N-linked (GlcNAc...) asparagine" evidence="1">
    <location>
        <position position="91"/>
    </location>
</feature>
<feature type="glycosylation site" description="N-linked (GlcNAc...) asparagine" evidence="1">
    <location>
        <position position="149"/>
    </location>
</feature>
<feature type="glycosylation site" description="N-linked (GlcNAc...) asparagine" evidence="3">
    <location>
        <position position="178"/>
    </location>
</feature>
<feature type="glycosylation site" description="N-linked (GlcNAc...) asparagine" evidence="1">
    <location>
        <position position="228"/>
    </location>
</feature>
<feature type="glycosylation site" description="N-linked (GlcNAc...) asparagine" evidence="1">
    <location>
        <position position="280"/>
    </location>
</feature>
<feature type="glycosylation site" description="N-linked (GlcNAc...) asparagine" evidence="1">
    <location>
        <position position="320"/>
    </location>
</feature>
<feature type="glycosylation site" description="N-linked (GlcNAc...) asparagine" evidence="3">
    <location>
        <position position="330"/>
    </location>
</feature>
<feature type="glycosylation site" description="N-linked (GlcNAc...) asparagine" evidence="3">
    <location>
        <position position="331"/>
    </location>
</feature>
<feature type="glycosylation site" description="N-linked (GlcNAc...) asparagine" evidence="1">
    <location>
        <position position="519"/>
    </location>
</feature>
<feature type="glycosylation site" description="N-linked (GlcNAc...) asparagine" evidence="1">
    <location>
        <position position="684"/>
    </location>
</feature>
<feature type="disulfide bond" evidence="1">
    <location>
        <begin position="384"/>
        <end position="393"/>
    </location>
</feature>
<feature type="disulfide bond" evidence="1">
    <location>
        <begin position="443"/>
        <end position="446"/>
    </location>
</feature>
<feature type="disulfide bond" evidence="1">
    <location>
        <begin position="453"/>
        <end position="471"/>
    </location>
</feature>
<feature type="disulfide bond" evidence="1">
    <location>
        <begin position="648"/>
        <end position="761"/>
    </location>
</feature>